<proteinExistence type="evidence at protein level"/>
<keyword id="KW-0963">Cytoplasm</keyword>
<keyword id="KW-0413">Isomerase</keyword>
<keyword id="KW-0460">Magnesium</keyword>
<keyword id="KW-0479">Metal-binding</keyword>
<keyword id="KW-1185">Reference proteome</keyword>
<dbReference type="EC" id="5.4.2.8" evidence="5"/>
<dbReference type="EMBL" id="DQ442996">
    <property type="protein sequence ID" value="ABD97875.1"/>
    <property type="molecule type" value="mRNA"/>
</dbReference>
<dbReference type="EMBL" id="GQ412259">
    <property type="protein sequence ID" value="ACV41076.1"/>
    <property type="molecule type" value="Genomic_DNA"/>
</dbReference>
<dbReference type="SMR" id="Q1W374"/>
<dbReference type="STRING" id="4565.Q1W374"/>
<dbReference type="PaxDb" id="4565-Traes_4BL_D08D5FFB5.1"/>
<dbReference type="EnsemblPlants" id="TraesARI2A03G00818040.1">
    <property type="protein sequence ID" value="TraesARI2A03G00818040.1"/>
    <property type="gene ID" value="TraesARI2A03G00818040"/>
</dbReference>
<dbReference type="EnsemblPlants" id="TraesCLE_scaffold_043065_01G000100.1">
    <property type="protein sequence ID" value="TraesCLE_scaffold_043065_01G000100.1"/>
    <property type="gene ID" value="TraesCLE_scaffold_043065_01G000100"/>
</dbReference>
<dbReference type="EnsemblPlants" id="TraesJAG2A03G00809500.1">
    <property type="protein sequence ID" value="TraesJAG2A03G00809500.1"/>
    <property type="gene ID" value="TraesJAG2A03G00809500"/>
</dbReference>
<dbReference type="EnsemblPlants" id="TraesJUL2A03G00815490.1">
    <property type="protein sequence ID" value="TraesJUL2A03G00815490.1"/>
    <property type="gene ID" value="TraesJUL2A03G00815490"/>
</dbReference>
<dbReference type="EnsemblPlants" id="TraesKAR2A01G0489860.1">
    <property type="protein sequence ID" value="cds.TraesKAR2A01G0489860.1"/>
    <property type="gene ID" value="TraesKAR2A01G0489860"/>
</dbReference>
<dbReference type="EnsemblPlants" id="TraesLAC2A03G00813310.1">
    <property type="protein sequence ID" value="TraesLAC2A03G00813310.1"/>
    <property type="gene ID" value="TraesLAC2A03G00813310"/>
</dbReference>
<dbReference type="EnsemblPlants" id="TraesLDM2A03G00811790.1">
    <property type="protein sequence ID" value="TraesLDM2A03G00811790.1"/>
    <property type="gene ID" value="TraesLDM2A03G00811790"/>
</dbReference>
<dbReference type="EnsemblPlants" id="TraesMAC2A03G00807870.1">
    <property type="protein sequence ID" value="TraesMAC2A03G00807870.1"/>
    <property type="gene ID" value="TraesMAC2A03G00807870"/>
</dbReference>
<dbReference type="EnsemblPlants" id="TraesPARA_EIv1.0_0336280.1">
    <property type="protein sequence ID" value="TraesPARA_EIv1.0_0336280.1.CDS"/>
    <property type="gene ID" value="TraesPARA_EIv1.0_0336280"/>
</dbReference>
<dbReference type="EnsemblPlants" id="TraesSTA2A03G00808020.1">
    <property type="protein sequence ID" value="TraesSTA2A03G00808020.1"/>
    <property type="gene ID" value="TraesSTA2A03G00808020"/>
</dbReference>
<dbReference type="EnsemblPlants" id="TraesSYM2A03G00817380.1">
    <property type="protein sequence ID" value="TraesSYM2A03G00817380.1"/>
    <property type="gene ID" value="TraesSYM2A03G00817380"/>
</dbReference>
<dbReference type="EnsemblPlants" id="TraesWEE_scaffold_029483_01G000200.1">
    <property type="protein sequence ID" value="TraesWEE_scaffold_029483_01G000200.1"/>
    <property type="gene ID" value="TraesWEE_scaffold_029483_01G000200"/>
</dbReference>
<dbReference type="Gramene" id="TraesARI2A03G00818040.1">
    <property type="protein sequence ID" value="TraesARI2A03G00818040.1"/>
    <property type="gene ID" value="TraesARI2A03G00818040"/>
</dbReference>
<dbReference type="Gramene" id="TraesCLE_scaffold_043065_01G000100.1">
    <property type="protein sequence ID" value="TraesCLE_scaffold_043065_01G000100.1"/>
    <property type="gene ID" value="TraesCLE_scaffold_043065_01G000100"/>
</dbReference>
<dbReference type="Gramene" id="TraesJAG2A03G00809500.1">
    <property type="protein sequence ID" value="TraesJAG2A03G00809500.1"/>
    <property type="gene ID" value="TraesJAG2A03G00809500"/>
</dbReference>
<dbReference type="Gramene" id="TraesJUL2A03G00815490.1">
    <property type="protein sequence ID" value="TraesJUL2A03G00815490.1"/>
    <property type="gene ID" value="TraesJUL2A03G00815490"/>
</dbReference>
<dbReference type="Gramene" id="TraesKAR2A01G0489860.1">
    <property type="protein sequence ID" value="cds.TraesKAR2A01G0489860.1"/>
    <property type="gene ID" value="TraesKAR2A01G0489860"/>
</dbReference>
<dbReference type="Gramene" id="TraesLAC2A03G00813310.1">
    <property type="protein sequence ID" value="TraesLAC2A03G00813310.1"/>
    <property type="gene ID" value="TraesLAC2A03G00813310"/>
</dbReference>
<dbReference type="Gramene" id="TraesLDM2A03G00811790.1">
    <property type="protein sequence ID" value="TraesLDM2A03G00811790.1"/>
    <property type="gene ID" value="TraesLDM2A03G00811790"/>
</dbReference>
<dbReference type="Gramene" id="TraesMAC2A03G00807870.1">
    <property type="protein sequence ID" value="TraesMAC2A03G00807870.1"/>
    <property type="gene ID" value="TraesMAC2A03G00807870"/>
</dbReference>
<dbReference type="Gramene" id="TraesPARA_EIv1.0_0336280.1">
    <property type="protein sequence ID" value="TraesPARA_EIv1.0_0336280.1.CDS"/>
    <property type="gene ID" value="TraesPARA_EIv1.0_0336280"/>
</dbReference>
<dbReference type="Gramene" id="TraesSTA2A03G00808020.1">
    <property type="protein sequence ID" value="TraesSTA2A03G00808020.1"/>
    <property type="gene ID" value="TraesSTA2A03G00808020"/>
</dbReference>
<dbReference type="Gramene" id="TraesSYM2A03G00817380.1">
    <property type="protein sequence ID" value="TraesSYM2A03G00817380.1"/>
    <property type="gene ID" value="TraesSYM2A03G00817380"/>
</dbReference>
<dbReference type="Gramene" id="TraesWEE_scaffold_029483_01G000200.1">
    <property type="protein sequence ID" value="TraesWEE_scaffold_029483_01G000200.1"/>
    <property type="gene ID" value="TraesWEE_scaffold_029483_01G000200"/>
</dbReference>
<dbReference type="eggNOG" id="KOG3189">
    <property type="taxonomic scope" value="Eukaryota"/>
</dbReference>
<dbReference type="BRENDA" id="5.4.2.8">
    <property type="organism ID" value="6500"/>
</dbReference>
<dbReference type="UniPathway" id="UPA00126">
    <property type="reaction ID" value="UER00424"/>
</dbReference>
<dbReference type="Proteomes" id="UP000019116">
    <property type="component" value="Unplaced"/>
</dbReference>
<dbReference type="ExpressionAtlas" id="Q1W374">
    <property type="expression patterns" value="baseline and differential"/>
</dbReference>
<dbReference type="GO" id="GO:0005829">
    <property type="term" value="C:cytosol"/>
    <property type="evidence" value="ECO:0000318"/>
    <property type="project" value="GO_Central"/>
</dbReference>
<dbReference type="GO" id="GO:0046872">
    <property type="term" value="F:metal ion binding"/>
    <property type="evidence" value="ECO:0007669"/>
    <property type="project" value="UniProtKB-KW"/>
</dbReference>
<dbReference type="GO" id="GO:0004615">
    <property type="term" value="F:phosphomannomutase activity"/>
    <property type="evidence" value="ECO:0000318"/>
    <property type="project" value="GO_Central"/>
</dbReference>
<dbReference type="GO" id="GO:0009298">
    <property type="term" value="P:GDP-mannose biosynthetic process"/>
    <property type="evidence" value="ECO:0007669"/>
    <property type="project" value="UniProtKB-UniPathway"/>
</dbReference>
<dbReference type="GO" id="GO:0006013">
    <property type="term" value="P:mannose metabolic process"/>
    <property type="evidence" value="ECO:0000318"/>
    <property type="project" value="GO_Central"/>
</dbReference>
<dbReference type="GO" id="GO:0006487">
    <property type="term" value="P:protein N-linked glycosylation"/>
    <property type="evidence" value="ECO:0000318"/>
    <property type="project" value="GO_Central"/>
</dbReference>
<dbReference type="CDD" id="cd02585">
    <property type="entry name" value="HAD_PMM"/>
    <property type="match status" value="1"/>
</dbReference>
<dbReference type="FunFam" id="3.30.1240.20:FF:000001">
    <property type="entry name" value="Phosphomannomutase"/>
    <property type="match status" value="1"/>
</dbReference>
<dbReference type="Gene3D" id="3.30.1240.20">
    <property type="match status" value="1"/>
</dbReference>
<dbReference type="Gene3D" id="3.40.50.1000">
    <property type="entry name" value="HAD superfamily/HAD-like"/>
    <property type="match status" value="1"/>
</dbReference>
<dbReference type="InterPro" id="IPR036412">
    <property type="entry name" value="HAD-like_sf"/>
</dbReference>
<dbReference type="InterPro" id="IPR006379">
    <property type="entry name" value="HAD-SF_hydro_IIB"/>
</dbReference>
<dbReference type="InterPro" id="IPR023214">
    <property type="entry name" value="HAD_sf"/>
</dbReference>
<dbReference type="InterPro" id="IPR005002">
    <property type="entry name" value="PMM"/>
</dbReference>
<dbReference type="InterPro" id="IPR043169">
    <property type="entry name" value="PMM_cap"/>
</dbReference>
<dbReference type="NCBIfam" id="TIGR01484">
    <property type="entry name" value="HAD-SF-IIB"/>
    <property type="match status" value="1"/>
</dbReference>
<dbReference type="PANTHER" id="PTHR10466">
    <property type="entry name" value="PHOSPHOMANNOMUTASE"/>
    <property type="match status" value="1"/>
</dbReference>
<dbReference type="PANTHER" id="PTHR10466:SF15">
    <property type="entry name" value="PHOSPHOMANNOMUTASE"/>
    <property type="match status" value="1"/>
</dbReference>
<dbReference type="Pfam" id="PF03332">
    <property type="entry name" value="PMM"/>
    <property type="match status" value="1"/>
</dbReference>
<dbReference type="SFLD" id="SFLDF00445">
    <property type="entry name" value="alpha-phosphomannomutase"/>
    <property type="match status" value="1"/>
</dbReference>
<dbReference type="SFLD" id="SFLDS00003">
    <property type="entry name" value="Haloacid_Dehalogenase"/>
    <property type="match status" value="1"/>
</dbReference>
<dbReference type="SUPFAM" id="SSF56784">
    <property type="entry name" value="HAD-like"/>
    <property type="match status" value="1"/>
</dbReference>
<name>PMM_WHEAT</name>
<sequence length="249" mass="28252">MAAARKDAGVLALFDVDGTLTAPRKEVTPEMLEFMKRLRENVTVGVVGGSDLVKISEQLGKSVITDYDYVFSENGLVAHKDGKLIGTQSLKTYLGDDQLKEFINFTLHYIADLDIPIKRGTFIEFRSGMINVSPIGRNCSQEERDDFEKYDKVHNVRPKMVSVLREKFAHLNLTFSIGGQISFDVFPQGWDKTYCLRYLEEFKEIHFFGDKTYKGGNDHEIFESDRTVGHTVTSPNDTVQQCKSIFLSE</sequence>
<evidence type="ECO:0000250" key="1">
    <source>
        <dbReference type="UniProtKB" id="A0A0U1WZ18"/>
    </source>
</evidence>
<evidence type="ECO:0000250" key="2">
    <source>
        <dbReference type="UniProtKB" id="P31353"/>
    </source>
</evidence>
<evidence type="ECO:0000250" key="3">
    <source>
        <dbReference type="UniProtKB" id="Q92871"/>
    </source>
</evidence>
<evidence type="ECO:0000269" key="4">
    <source>
    </source>
</evidence>
<evidence type="ECO:0000269" key="5">
    <source>
    </source>
</evidence>
<evidence type="ECO:0000303" key="6">
    <source>
    </source>
</evidence>
<evidence type="ECO:0000303" key="7">
    <source>
    </source>
</evidence>
<evidence type="ECO:0000305" key="8"/>
<evidence type="ECO:0000305" key="9">
    <source>
    </source>
</evidence>
<gene>
    <name evidence="6" type="primary">PMM</name>
    <name evidence="7" type="synonym">PMM-A1</name>
</gene>
<comment type="function">
    <text evidence="4 5 8 9">Catalyzes the interconversion of mannose-6-phosphate to mannose-1-phosphate, the precursor for the synthesis of GDP-mannose (Probable) (PubMed:20920368). GDP-mannose is an essential sugar nucleotide for the synthesis of D-mannose-containing cell wall polysaccharides (galactomannans and glucomannans), glycolipids, glycoproteins and the antioxidant L-ascorbate (Probable). Can complement the yeast temperature-sensitive mutant sec53-6 (PubMed:17217471, PubMed:20920368).</text>
</comment>
<comment type="catalytic activity">
    <reaction evidence="5">
        <text>alpha-D-mannose 1-phosphate = D-mannose 6-phosphate</text>
        <dbReference type="Rhea" id="RHEA:11140"/>
        <dbReference type="ChEBI" id="CHEBI:58409"/>
        <dbReference type="ChEBI" id="CHEBI:58735"/>
        <dbReference type="EC" id="5.4.2.8"/>
    </reaction>
</comment>
<comment type="cofactor">
    <cofactor evidence="3">
        <name>Mg(2+)</name>
        <dbReference type="ChEBI" id="CHEBI:18420"/>
    </cofactor>
</comment>
<comment type="biophysicochemical properties">
    <kinetics>
        <KM evidence="5">0.46 mM for alpha-D-mannose 1-phosphate</KM>
    </kinetics>
</comment>
<comment type="pathway">
    <text evidence="8">Nucleotide-sugar biosynthesis; GDP-alpha-D-mannose biosynthesis; alpha-D-mannose 1-phosphate from D-fructose 6-phosphate: step 2/2.</text>
</comment>
<comment type="subunit">
    <text evidence="3">Homodimer.</text>
</comment>
<comment type="subcellular location">
    <subcellularLocation>
        <location evidence="1">Cytoplasm</location>
    </subcellularLocation>
</comment>
<comment type="tissue specificity">
    <text evidence="5">Expressed in roots, leaves, flag leaves and immature spikes.</text>
</comment>
<comment type="similarity">
    <text evidence="8">Belongs to the eukaryotic PMM family.</text>
</comment>
<feature type="chain" id="PRO_0000326497" description="Phosphomannomutase">
    <location>
        <begin position="1"/>
        <end position="249"/>
    </location>
</feature>
<feature type="active site" description="Nucleophile" evidence="3">
    <location>
        <position position="15"/>
    </location>
</feature>
<feature type="active site" description="Proton donor/acceptor" evidence="3">
    <location>
        <position position="17"/>
    </location>
</feature>
<feature type="binding site" evidence="3">
    <location>
        <position position="15"/>
    </location>
    <ligand>
        <name>Mg(2+)</name>
        <dbReference type="ChEBI" id="CHEBI:18420"/>
        <label>1</label>
    </ligand>
</feature>
<feature type="binding site" evidence="3">
    <location>
        <position position="17"/>
    </location>
    <ligand>
        <name>Mg(2+)</name>
        <dbReference type="ChEBI" id="CHEBI:18420"/>
        <label>1</label>
    </ligand>
</feature>
<feature type="binding site" evidence="3">
    <location>
        <position position="24"/>
    </location>
    <ligand>
        <name>alpha-D-mannose 1-phosphate</name>
        <dbReference type="ChEBI" id="CHEBI:58409"/>
    </ligand>
</feature>
<feature type="binding site" evidence="3">
    <location>
        <position position="126"/>
    </location>
    <ligand>
        <name>alpha-D-mannose 1-phosphate</name>
        <dbReference type="ChEBI" id="CHEBI:58409"/>
    </ligand>
</feature>
<feature type="binding site" evidence="3">
    <location>
        <position position="137"/>
    </location>
    <ligand>
        <name>alpha-D-mannose 1-phosphate</name>
        <dbReference type="ChEBI" id="CHEBI:58409"/>
    </ligand>
</feature>
<feature type="binding site" evidence="3">
    <location>
        <position position="144"/>
    </location>
    <ligand>
        <name>alpha-D-mannose 1-phosphate</name>
        <dbReference type="ChEBI" id="CHEBI:58409"/>
    </ligand>
</feature>
<feature type="binding site" evidence="3">
    <location>
        <position position="182"/>
    </location>
    <ligand>
        <name>alpha-D-mannose 1-phosphate</name>
        <dbReference type="ChEBI" id="CHEBI:58409"/>
    </ligand>
</feature>
<feature type="binding site" evidence="3">
    <location>
        <position position="184"/>
    </location>
    <ligand>
        <name>alpha-D-mannose 1-phosphate</name>
        <dbReference type="ChEBI" id="CHEBI:58409"/>
    </ligand>
</feature>
<feature type="binding site" evidence="2">
    <location>
        <position position="210"/>
    </location>
    <ligand>
        <name>Mg(2+)</name>
        <dbReference type="ChEBI" id="CHEBI:18420"/>
        <label>1</label>
    </ligand>
</feature>
<feature type="binding site" evidence="3">
    <location>
        <position position="222"/>
    </location>
    <ligand>
        <name>Mg(2+)</name>
        <dbReference type="ChEBI" id="CHEBI:18420"/>
        <label>2</label>
    </ligand>
</feature>
<feature type="binding site" evidence="3">
    <location>
        <position position="227"/>
    </location>
    <ligand>
        <name>Mg(2+)</name>
        <dbReference type="ChEBI" id="CHEBI:18420"/>
        <label>2</label>
    </ligand>
</feature>
<accession>Q1W374</accession>
<accession>C8CK06</accession>
<organism>
    <name type="scientific">Triticum aestivum</name>
    <name type="common">Wheat</name>
    <dbReference type="NCBI Taxonomy" id="4565"/>
    <lineage>
        <taxon>Eukaryota</taxon>
        <taxon>Viridiplantae</taxon>
        <taxon>Streptophyta</taxon>
        <taxon>Embryophyta</taxon>
        <taxon>Tracheophyta</taxon>
        <taxon>Spermatophyta</taxon>
        <taxon>Magnoliopsida</taxon>
        <taxon>Liliopsida</taxon>
        <taxon>Poales</taxon>
        <taxon>Poaceae</taxon>
        <taxon>BOP clade</taxon>
        <taxon>Pooideae</taxon>
        <taxon>Triticodae</taxon>
        <taxon>Triticeae</taxon>
        <taxon>Triticinae</taxon>
        <taxon>Triticum</taxon>
    </lineage>
</organism>
<protein>
    <recommendedName>
        <fullName evidence="6">Phosphomannomutase</fullName>
        <shortName evidence="6">TaPMM</shortName>
        <ecNumber evidence="5">5.4.2.8</ecNumber>
    </recommendedName>
</protein>
<reference key="1">
    <citation type="journal article" date="2007" name="Plant J.">
        <title>Molecular and functional analysis of phosphomannomutase (PMM) from higher plants and genetic evidence for the involvement of PMM in ascorbic acid biosynthesis in Arabidopsis and Nicotiana benthamiana.</title>
        <authorList>
            <person name="Qian W."/>
            <person name="Yu C."/>
            <person name="Qin H."/>
            <person name="Liu X."/>
            <person name="Zhang A."/>
            <person name="Johansen I.E."/>
            <person name="Wang D."/>
        </authorList>
    </citation>
    <scope>NUCLEOTIDE SEQUENCE [MRNA]</scope>
    <scope>FUNCTION</scope>
</reference>
<reference key="2">
    <citation type="journal article" date="2010" name="BMC Plant Biol.">
        <title>Molecular analysis of phosphomannomutase (PMM) genes reveals a unique PMM duplication event in diverse Triticeae species and the main PMM isozymes in bread wheat tissues.</title>
        <authorList>
            <person name="Yu C."/>
            <person name="Li Y."/>
            <person name="Li B."/>
            <person name="Liu X."/>
            <person name="Hao L."/>
            <person name="Chen J."/>
            <person name="Qian W."/>
            <person name="Li S."/>
            <person name="Wang G."/>
            <person name="Bai S."/>
            <person name="Ye H."/>
            <person name="Qin H."/>
            <person name="Shen Q."/>
            <person name="Chen L."/>
            <person name="Zhang A."/>
            <person name="Wang D."/>
        </authorList>
    </citation>
    <scope>NUCLEOTIDE SEQUENCE [GENOMIC DNA]</scope>
    <scope>FUNCTION</scope>
    <scope>CATALYTIC ACTIVITY</scope>
    <scope>BIOPHYSICOCHEMICAL PROPERTIES</scope>
    <scope>TISSUE SPECIFICITY</scope>
</reference>